<sequence length="376" mass="41871">MGEEDVQALVVDNGSGNVKAGVAGDDAPRSVFPSIVGRPKNPGIMVGMEEKDAFVGDEAQTKRGILTLKYPIEHGIVTNWDDMEKIWHHTFYNELRAAPEEHPVLLTEAPLNPKGNRERMTQIMFESFNVPAMYVAIQAVLSLYSSGRTTGIVLDSGDGVSHTVPIYEGYALPHAIMRLDLAGRDLTEYLMKILHERGYGFSTSAEKEIVRDIKEKLCYIALNFDEEMKTSEQSSDIEKSYELPDGNIITVGNERFRCPEALFQPSFLGKEAAGIHTTTFNSIKKCDVDIRKDLYGNIVLSGGTTMYEGIGERLTRDITTLAPSTMKIKVVAPPERKYSVWIGGSILSSLSTFQQMWITKEEYDESGPSIVHRKCF</sequence>
<organism>
    <name type="scientific">Plasmodium falciparum (isolate 3D7)</name>
    <dbReference type="NCBI Taxonomy" id="36329"/>
    <lineage>
        <taxon>Eukaryota</taxon>
        <taxon>Sar</taxon>
        <taxon>Alveolata</taxon>
        <taxon>Apicomplexa</taxon>
        <taxon>Aconoidasida</taxon>
        <taxon>Haemosporida</taxon>
        <taxon>Plasmodiidae</taxon>
        <taxon>Plasmodium</taxon>
        <taxon>Plasmodium (Laverania)</taxon>
    </lineage>
</organism>
<protein>
    <recommendedName>
        <fullName evidence="11">Actin-1</fullName>
        <shortName evidence="11">PfAct1</shortName>
        <ecNumber evidence="3 7">3.6.4.-</ecNumber>
    </recommendedName>
    <alternativeName>
        <fullName evidence="10">Actin I</fullName>
        <shortName evidence="10">PfActI</shortName>
    </alternativeName>
</protein>
<evidence type="ECO:0000250" key="1">
    <source>
        <dbReference type="UniProtKB" id="P86287"/>
    </source>
</evidence>
<evidence type="ECO:0000250" key="2">
    <source>
        <dbReference type="UniProtKB" id="Q4Z1L3"/>
    </source>
</evidence>
<evidence type="ECO:0000269" key="3">
    <source>
    </source>
</evidence>
<evidence type="ECO:0000269" key="4">
    <source>
    </source>
</evidence>
<evidence type="ECO:0000269" key="5">
    <source>
    </source>
</evidence>
<evidence type="ECO:0000269" key="6">
    <source>
    </source>
</evidence>
<evidence type="ECO:0000269" key="7">
    <source>
    </source>
</evidence>
<evidence type="ECO:0000269" key="8">
    <source>
    </source>
</evidence>
<evidence type="ECO:0000269" key="9">
    <source ref="7"/>
</evidence>
<evidence type="ECO:0000303" key="10">
    <source>
    </source>
</evidence>
<evidence type="ECO:0000303" key="11">
    <source>
    </source>
</evidence>
<evidence type="ECO:0000305" key="12"/>
<evidence type="ECO:0000305" key="13">
    <source>
    </source>
</evidence>
<evidence type="ECO:0007744" key="14">
    <source>
        <dbReference type="PDB" id="4CBU"/>
    </source>
</evidence>
<evidence type="ECO:0007744" key="15">
    <source>
        <dbReference type="PDB" id="5MVV"/>
    </source>
</evidence>
<evidence type="ECO:0007744" key="16">
    <source>
        <dbReference type="PDB" id="5OGW"/>
    </source>
</evidence>
<evidence type="ECO:0007744" key="17">
    <source>
        <dbReference type="PDB" id="6I4D"/>
    </source>
</evidence>
<evidence type="ECO:0007744" key="18">
    <source>
        <dbReference type="PDB" id="6I4E"/>
    </source>
</evidence>
<evidence type="ECO:0007744" key="19">
    <source>
        <dbReference type="PDB" id="6I4F"/>
    </source>
</evidence>
<evidence type="ECO:0007744" key="20">
    <source>
        <dbReference type="PDB" id="6I4G"/>
    </source>
</evidence>
<evidence type="ECO:0007744" key="21">
    <source>
        <dbReference type="PDB" id="6I4H"/>
    </source>
</evidence>
<evidence type="ECO:0007744" key="22">
    <source>
        <dbReference type="PDB" id="6I4I"/>
    </source>
</evidence>
<evidence type="ECO:0007744" key="23">
    <source>
        <dbReference type="PDB" id="6I4J"/>
    </source>
</evidence>
<evidence type="ECO:0007744" key="24">
    <source>
        <dbReference type="PDB" id="6I4K"/>
    </source>
</evidence>
<evidence type="ECO:0007744" key="25">
    <source>
        <dbReference type="PDB" id="6I4L"/>
    </source>
</evidence>
<evidence type="ECO:0007744" key="26">
    <source>
        <dbReference type="PDB" id="6TU4"/>
    </source>
</evidence>
<evidence type="ECO:0007744" key="27">
    <source>
        <dbReference type="PDB" id="6TU7"/>
    </source>
</evidence>
<evidence type="ECO:0007744" key="28">
    <source>
        <dbReference type="PDB" id="7ALN"/>
    </source>
</evidence>
<evidence type="ECO:0007829" key="29">
    <source>
        <dbReference type="PDB" id="6I4E"/>
    </source>
</evidence>
<evidence type="ECO:0007829" key="30">
    <source>
        <dbReference type="PDB" id="6I4G"/>
    </source>
</evidence>
<evidence type="ECO:0007829" key="31">
    <source>
        <dbReference type="PDB" id="6I4K"/>
    </source>
</evidence>
<evidence type="ECO:0007829" key="32">
    <source>
        <dbReference type="PDB" id="6TU4"/>
    </source>
</evidence>
<name>ACT1_PLAF7</name>
<dbReference type="EC" id="3.6.4.-" evidence="3 7"/>
<dbReference type="EMBL" id="LN999947">
    <property type="protein sequence ID" value="CZT99616.1"/>
    <property type="molecule type" value="Genomic_DNA"/>
</dbReference>
<dbReference type="PIR" id="S12628">
    <property type="entry name" value="S12628"/>
</dbReference>
<dbReference type="RefSeq" id="XP_001350847.1">
    <property type="nucleotide sequence ID" value="XM_001350811.1"/>
</dbReference>
<dbReference type="PDB" id="4CBU">
    <property type="method" value="X-ray"/>
    <property type="resolution" value="1.30 A"/>
    <property type="chains" value="A=1-376"/>
</dbReference>
<dbReference type="PDB" id="5MVV">
    <property type="method" value="X-ray"/>
    <property type="resolution" value="1.40 A"/>
    <property type="chains" value="A=1-376"/>
</dbReference>
<dbReference type="PDB" id="5OGW">
    <property type="method" value="EM"/>
    <property type="resolution" value="3.80 A"/>
    <property type="chains" value="A/B/C/D/E=1-376"/>
</dbReference>
<dbReference type="PDB" id="6I4D">
    <property type="method" value="X-ray"/>
    <property type="resolution" value="1.24 A"/>
    <property type="chains" value="A=1-376"/>
</dbReference>
<dbReference type="PDB" id="6I4E">
    <property type="method" value="X-ray"/>
    <property type="resolution" value="1.22 A"/>
    <property type="chains" value="A=1-376"/>
</dbReference>
<dbReference type="PDB" id="6I4F">
    <property type="method" value="X-ray"/>
    <property type="resolution" value="1.50 A"/>
    <property type="chains" value="A=1-376"/>
</dbReference>
<dbReference type="PDB" id="6I4G">
    <property type="method" value="X-ray"/>
    <property type="resolution" value="2.00 A"/>
    <property type="chains" value="A/B=1-376"/>
</dbReference>
<dbReference type="PDB" id="6I4H">
    <property type="method" value="X-ray"/>
    <property type="resolution" value="1.40 A"/>
    <property type="chains" value="A=1-376"/>
</dbReference>
<dbReference type="PDB" id="6I4I">
    <property type="method" value="X-ray"/>
    <property type="resolution" value="1.90 A"/>
    <property type="chains" value="A=1-376"/>
</dbReference>
<dbReference type="PDB" id="6I4J">
    <property type="method" value="X-ray"/>
    <property type="resolution" value="1.50 A"/>
    <property type="chains" value="A=1-376"/>
</dbReference>
<dbReference type="PDB" id="6I4K">
    <property type="method" value="X-ray"/>
    <property type="resolution" value="1.83 A"/>
    <property type="chains" value="A=1-376"/>
</dbReference>
<dbReference type="PDB" id="6I4L">
    <property type="method" value="X-ray"/>
    <property type="resolution" value="1.83 A"/>
    <property type="chains" value="A=1-376"/>
</dbReference>
<dbReference type="PDB" id="6TU4">
    <property type="method" value="EM"/>
    <property type="resolution" value="2.60 A"/>
    <property type="chains" value="A/B/C/D/F=1-376"/>
</dbReference>
<dbReference type="PDB" id="6TU7">
    <property type="method" value="EM"/>
    <property type="resolution" value="3.10 A"/>
    <property type="chains" value="BP1/CP1/DP1/EP1=1-376"/>
</dbReference>
<dbReference type="PDB" id="7ALN">
    <property type="method" value="EM"/>
    <property type="resolution" value="3.77 A"/>
    <property type="chains" value="A/B/C/D/E=1-376"/>
</dbReference>
<dbReference type="PDBsum" id="4CBU"/>
<dbReference type="PDBsum" id="5MVV"/>
<dbReference type="PDBsum" id="5OGW"/>
<dbReference type="PDBsum" id="6I4D"/>
<dbReference type="PDBsum" id="6I4E"/>
<dbReference type="PDBsum" id="6I4F"/>
<dbReference type="PDBsum" id="6I4G"/>
<dbReference type="PDBsum" id="6I4H"/>
<dbReference type="PDBsum" id="6I4I"/>
<dbReference type="PDBsum" id="6I4J"/>
<dbReference type="PDBsum" id="6I4K"/>
<dbReference type="PDBsum" id="6I4L"/>
<dbReference type="PDBsum" id="6TU4"/>
<dbReference type="PDBsum" id="6TU7"/>
<dbReference type="PDBsum" id="7ALN"/>
<dbReference type="EMDB" id="EMD-10587"/>
<dbReference type="EMDB" id="EMD-10590"/>
<dbReference type="EMDB" id="EMD-11818"/>
<dbReference type="SMR" id="Q8I4X0"/>
<dbReference type="BioGRID" id="1206865">
    <property type="interactions" value="5"/>
</dbReference>
<dbReference type="IntAct" id="Q8I4X0">
    <property type="interactions" value="6"/>
</dbReference>
<dbReference type="STRING" id="36329.Q8I4X0"/>
<dbReference type="PaxDb" id="5833-PFL2215w"/>
<dbReference type="EnsemblProtists" id="CZT99616">
    <property type="protein sequence ID" value="CZT99616"/>
    <property type="gene ID" value="PF3D7_1246200"/>
</dbReference>
<dbReference type="GeneID" id="811495"/>
<dbReference type="KEGG" id="pfa:PF3D7_1246200"/>
<dbReference type="VEuPathDB" id="PlasmoDB:PF3D7_1246200"/>
<dbReference type="HOGENOM" id="CLU_027965_0_2_1"/>
<dbReference type="OMA" id="FHTTAER"/>
<dbReference type="OrthoDB" id="422673at2759"/>
<dbReference type="PhylomeDB" id="Q8I4X0"/>
<dbReference type="Reactome" id="R-PFA-3371497">
    <property type="pathway name" value="HSP90 chaperone cycle for steroid hormone receptors (SHR) in the presence of ligand"/>
</dbReference>
<dbReference type="Reactome" id="R-PFA-6798695">
    <property type="pathway name" value="Neutrophil degranulation"/>
</dbReference>
<dbReference type="EvolutionaryTrace" id="Q8I4X0"/>
<dbReference type="Proteomes" id="UP000001450">
    <property type="component" value="Chromosome 12"/>
</dbReference>
<dbReference type="GO" id="GO:0015629">
    <property type="term" value="C:actin cytoskeleton"/>
    <property type="evidence" value="ECO:0000314"/>
    <property type="project" value="UniProtKB"/>
</dbReference>
<dbReference type="GO" id="GO:0005884">
    <property type="term" value="C:actin filament"/>
    <property type="evidence" value="ECO:0000250"/>
    <property type="project" value="UniProtKB"/>
</dbReference>
<dbReference type="GO" id="GO:0005737">
    <property type="term" value="C:cytoplasm"/>
    <property type="evidence" value="ECO:0007669"/>
    <property type="project" value="UniProtKB-SubCell"/>
</dbReference>
<dbReference type="GO" id="GO:0005634">
    <property type="term" value="C:nucleus"/>
    <property type="evidence" value="ECO:0007669"/>
    <property type="project" value="UniProtKB-SubCell"/>
</dbReference>
<dbReference type="GO" id="GO:0005524">
    <property type="term" value="F:ATP binding"/>
    <property type="evidence" value="ECO:0000314"/>
    <property type="project" value="UniProtKB"/>
</dbReference>
<dbReference type="GO" id="GO:0016887">
    <property type="term" value="F:ATP hydrolysis activity"/>
    <property type="evidence" value="ECO:0000314"/>
    <property type="project" value="UniProtKB"/>
</dbReference>
<dbReference type="GO" id="GO:0005200">
    <property type="term" value="F:structural constituent of cytoskeleton"/>
    <property type="evidence" value="ECO:0000250"/>
    <property type="project" value="UniProtKB"/>
</dbReference>
<dbReference type="GO" id="GO:0007010">
    <property type="term" value="P:cytoskeleton organization"/>
    <property type="evidence" value="ECO:0000250"/>
    <property type="project" value="GeneDB"/>
</dbReference>
<dbReference type="GO" id="GO:0085017">
    <property type="term" value="P:entry into host cell by a symbiont-containing vacuole"/>
    <property type="evidence" value="ECO:0000315"/>
    <property type="project" value="UniProtKB"/>
</dbReference>
<dbReference type="GO" id="GO:0009665">
    <property type="term" value="P:plastid inheritance"/>
    <property type="evidence" value="ECO:0000315"/>
    <property type="project" value="UniProtKB"/>
</dbReference>
<dbReference type="GO" id="GO:0020014">
    <property type="term" value="P:schizogony"/>
    <property type="evidence" value="ECO:0000315"/>
    <property type="project" value="UniProtKB"/>
</dbReference>
<dbReference type="GO" id="GO:0070360">
    <property type="term" value="P:symbiont-mediated actin polymerization-dependent cell-to-cell migration in host"/>
    <property type="evidence" value="ECO:0000250"/>
    <property type="project" value="UniProtKB"/>
</dbReference>
<dbReference type="CDD" id="cd10224">
    <property type="entry name" value="ASKHA_NBD_actin"/>
    <property type="match status" value="1"/>
</dbReference>
<dbReference type="FunFam" id="3.30.420.40:FF:000205">
    <property type="entry name" value="Actin, alpha skeletal muscle"/>
    <property type="match status" value="1"/>
</dbReference>
<dbReference type="FunFam" id="3.90.640.10:FF:000001">
    <property type="entry name" value="Actin, muscle"/>
    <property type="match status" value="1"/>
</dbReference>
<dbReference type="FunFam" id="3.30.420.40:FF:000018">
    <property type="entry name" value="Actin-like protein (Centractin)"/>
    <property type="match status" value="1"/>
</dbReference>
<dbReference type="FunFam" id="3.30.420.40:FF:000404">
    <property type="entry name" value="Major actin"/>
    <property type="match status" value="1"/>
</dbReference>
<dbReference type="FunFam" id="3.30.420.40:FF:000058">
    <property type="entry name" value="Putative actin-related protein 5"/>
    <property type="match status" value="1"/>
</dbReference>
<dbReference type="Gene3D" id="3.30.420.40">
    <property type="match status" value="2"/>
</dbReference>
<dbReference type="Gene3D" id="3.90.640.10">
    <property type="entry name" value="Actin, Chain A, domain 4"/>
    <property type="match status" value="1"/>
</dbReference>
<dbReference type="InterPro" id="IPR004000">
    <property type="entry name" value="Actin"/>
</dbReference>
<dbReference type="InterPro" id="IPR020902">
    <property type="entry name" value="Actin/actin-like_CS"/>
</dbReference>
<dbReference type="InterPro" id="IPR004001">
    <property type="entry name" value="Actin_CS"/>
</dbReference>
<dbReference type="InterPro" id="IPR043129">
    <property type="entry name" value="ATPase_NBD"/>
</dbReference>
<dbReference type="PANTHER" id="PTHR11937">
    <property type="entry name" value="ACTIN"/>
    <property type="match status" value="1"/>
</dbReference>
<dbReference type="Pfam" id="PF00022">
    <property type="entry name" value="Actin"/>
    <property type="match status" value="1"/>
</dbReference>
<dbReference type="PRINTS" id="PR00190">
    <property type="entry name" value="ACTIN"/>
</dbReference>
<dbReference type="SMART" id="SM00268">
    <property type="entry name" value="ACTIN"/>
    <property type="match status" value="1"/>
</dbReference>
<dbReference type="SUPFAM" id="SSF53067">
    <property type="entry name" value="Actin-like ATPase domain"/>
    <property type="match status" value="2"/>
</dbReference>
<dbReference type="PROSITE" id="PS00406">
    <property type="entry name" value="ACTINS_1"/>
    <property type="match status" value="1"/>
</dbReference>
<dbReference type="PROSITE" id="PS00432">
    <property type="entry name" value="ACTINS_2"/>
    <property type="match status" value="1"/>
</dbReference>
<dbReference type="PROSITE" id="PS01132">
    <property type="entry name" value="ACTINS_ACT_LIKE"/>
    <property type="match status" value="1"/>
</dbReference>
<comment type="function">
    <text evidence="3 5 6 7 13">Actin is a highly conserved protein that polymerizes to produce filaments that form cross-linked networks in the cytoplasm (PubMed:24743229, PubMed:28923924, PubMed:31199804). Polymerizes into shorter and less stable actin filaments compared to ACT2/actin-2; this is thought to facilitate gliding motility and host cell invasion (PubMed:24743229, PubMed:28923924). Has ATPase activity (PubMed:24743229, PubMed:31199804). ATP hydrolysis leads to the formation of a stable intermediate ADP-inorganic phosphate (Pi) actin, which is followed by the release of Pi (Probable). ATP hydrolysis affects filament stability; ADP-bound actin depolymerizes much faster than ATP- or ADP-Pi-bound actin (Probable). Plays an essential role during the asexual blood stage (PubMed:28810863). At the segmented schizont stage, required for apicoplast migration and segregation into individual daughter merozoites (PubMed:28810863). Also, required for the separation of daughter merozoites in the final stages of cytokinesis (PubMed:28810863). Essential for merozoite invasion of, but not adhesion to or reorientation towards, host erythrocytes (PubMed:28810863).</text>
</comment>
<comment type="catalytic activity">
    <reaction evidence="3 7">
        <text>ATP + H2O = ADP + phosphate + H(+)</text>
        <dbReference type="Rhea" id="RHEA:13065"/>
        <dbReference type="ChEBI" id="CHEBI:15377"/>
        <dbReference type="ChEBI" id="CHEBI:15378"/>
        <dbReference type="ChEBI" id="CHEBI:30616"/>
        <dbReference type="ChEBI" id="CHEBI:43474"/>
        <dbReference type="ChEBI" id="CHEBI:456216"/>
    </reaction>
</comment>
<comment type="activity regulation">
    <text evidence="3">ATP hydrolysis occurs in the polymeric state (PubMed:24743229). Unlike for mammalian actin, ATP hydrolysis occurs also in the monomeric form and the release of inorganic phosphate (Pi) is more efficient (PubMed:24743229).</text>
</comment>
<comment type="subunit">
    <text evidence="1 3 6 8">Monomer (G-actin) (PubMed:24743229). Oligomer (F-actin) (PubMed:24743229, PubMed:28923924). Polymerization of globular actin (G-actin) leads to a structural filament (F-actin) in the form of a two-stranded helix (PubMed:24743229, PubMed:28923924). Unlike for mammalian monomeric actin, parasite monomeric actin is able to induce oligomerization in the presence of ATP or ADP (PubMed:24743229). Mg(2+), which is used to coordinate ATP, is required for polymerization (PubMed:24743229). Interacts with MyoA (PubMed:33767187). Interacts with DNase I with low affinity (By similarity).</text>
</comment>
<comment type="subcellular location">
    <subcellularLocation>
        <location evidence="2">Cytoplasm</location>
    </subcellularLocation>
    <subcellularLocation>
        <location evidence="2">Nucleus</location>
    </subcellularLocation>
    <subcellularLocation>
        <location evidence="5">Cytoplasm</location>
        <location evidence="5">Cytoskeleton</location>
    </subcellularLocation>
    <text evidence="2 5">During host erythrocyte invasion, filamentous actin localizes close to the junction between merozoites and the host cell (PubMed:28810863). In schizonts, filamentous actin appears to connect apicoplasts (PubMed:28810863). Prior to gametocyte activation in the mosquito midgut, localizes to both the cytoplasm and the nucleus (By similarity). Following gametocyte activation, relocalizes completely to the cytoplasm, in an ACT2-dependent manner (By similarity).</text>
</comment>
<comment type="developmental stage">
    <text evidence="5">Expressed during the asexual blood stage, including in trophozoites, schizonts and merozoites (at protein level) (PubMed:28810863). Expression increases at the late trophozoite stage (at protein level) (PubMed:28810863).</text>
</comment>
<comment type="disruption phenotype">
    <text evidence="5">Conditional knockout at the ring stage results in the production of merozoites; however, these merozoites fail to start a new infection cycle due to a failure to invade new host erythrocytes (PubMed:28810863). During schizogony, daughter merozoite development and segmentation is abnormal and is characterized by the presence of aberrant membranous pockets adjacent to the food vacuole (PubMed:28810863). Apicoplasts have few branches and collapse close to the food vacuole failing to migrate to individual daughter cells (PubMed:28810863). No defect in secretory organelles or mitochondria and the formation of Maurer's clefts in the host cytoplasm is normal (PubMed:28810863). Egress from host erythrocytes is normal; however, some merozoites stayed conjoined, remaining connected to each other and to the central food vacuole (PubMed:28810863). No defect in microneme secretion (PubMed:28810863). Merozoite attachment to the host erythrocyte, reorientation and secretion of RON proteins are normal (PubMed:28810863). However, the formation of the circular junction between the parasite and host cell membranes is impaired and merozoites are incapable of deforming and invading host erythrocytes (PubMed:28810863). Production of gametocytes is normal (PubMed:28810863).</text>
</comment>
<comment type="miscellaneous">
    <text evidence="7">A potassium ion appears to reside in the active site during hydrolysis and leaves together with the inorganic phosphate Pi. K(+) does not activate Pi release; however, it may be relevant for ATP hydrolysis.</text>
</comment>
<comment type="miscellaneous">
    <text evidence="3">ACT1 and ACT2 differ in their polymerization, filament stability and helical structure (PubMed:24743229). Unlike mammalian actin, Apicomplexa actins do not form long and stable filaments (PubMed:24743229).</text>
</comment>
<comment type="similarity">
    <text evidence="12">Belongs to the actin family.</text>
</comment>
<gene>
    <name evidence="11" type="primary">ACT1</name>
    <name evidence="10" type="synonym">ACTI</name>
    <name type="ORF">PF3D7_1246200</name>
    <name type="ORF">PFL2215w</name>
</gene>
<keyword id="KW-0002">3D-structure</keyword>
<keyword id="KW-0067">ATP-binding</keyword>
<keyword id="KW-0963">Cytoplasm</keyword>
<keyword id="KW-0206">Cytoskeleton</keyword>
<keyword id="KW-0378">Hydrolase</keyword>
<keyword id="KW-0547">Nucleotide-binding</keyword>
<keyword id="KW-0539">Nucleus</keyword>
<keyword id="KW-1185">Reference proteome</keyword>
<reference key="1">
    <citation type="journal article" date="2002" name="Nature">
        <title>Genome sequence of the human malaria parasite Plasmodium falciparum.</title>
        <authorList>
            <person name="Gardner M.J."/>
            <person name="Hall N."/>
            <person name="Fung E."/>
            <person name="White O."/>
            <person name="Berriman M."/>
            <person name="Hyman R.W."/>
            <person name="Carlton J.M."/>
            <person name="Pain A."/>
            <person name="Nelson K.E."/>
            <person name="Bowman S."/>
            <person name="Paulsen I.T."/>
            <person name="James K.D."/>
            <person name="Eisen J.A."/>
            <person name="Rutherford K.M."/>
            <person name="Salzberg S.L."/>
            <person name="Craig A."/>
            <person name="Kyes S."/>
            <person name="Chan M.-S."/>
            <person name="Nene V."/>
            <person name="Shallom S.J."/>
            <person name="Suh B."/>
            <person name="Peterson J."/>
            <person name="Angiuoli S."/>
            <person name="Pertea M."/>
            <person name="Allen J."/>
            <person name="Selengut J."/>
            <person name="Haft D."/>
            <person name="Mather M.W."/>
            <person name="Vaidya A.B."/>
            <person name="Martin D.M.A."/>
            <person name="Fairlamb A.H."/>
            <person name="Fraunholz M.J."/>
            <person name="Roos D.S."/>
            <person name="Ralph S.A."/>
            <person name="McFadden G.I."/>
            <person name="Cummings L.M."/>
            <person name="Subramanian G.M."/>
            <person name="Mungall C."/>
            <person name="Venter J.C."/>
            <person name="Carucci D.J."/>
            <person name="Hoffman S.L."/>
            <person name="Newbold C."/>
            <person name="Davis R.W."/>
            <person name="Fraser C.M."/>
            <person name="Barrell B.G."/>
        </authorList>
    </citation>
    <scope>NUCLEOTIDE SEQUENCE [LARGE SCALE GENOMIC DNA]</scope>
    <source>
        <strain>3D7</strain>
    </source>
</reference>
<reference key="2">
    <citation type="journal article" date="2017" name="BMC Biol.">
        <title>Multiple essential functions of Plasmodium falciparum actin-1 during malaria blood-stage development.</title>
        <authorList>
            <person name="Das S."/>
            <person name="Lemgruber L."/>
            <person name="Tay C.L."/>
            <person name="Baum J."/>
            <person name="Meissner M."/>
        </authorList>
    </citation>
    <scope>FUNCTION</scope>
    <scope>SUBCELLULAR LOCATION</scope>
    <scope>DEVELOPMENTAL STAGE</scope>
    <scope>DISRUPTION PHENOTYPE</scope>
</reference>
<reference evidence="14" key="3">
    <citation type="journal article" date="2014" name="PLoS Pathog.">
        <title>Structural differences explain diverse functions of Plasmodium actins.</title>
        <authorList>
            <person name="Vahokoski J."/>
            <person name="Bhargav S.P."/>
            <person name="Desfosses A."/>
            <person name="Andreadaki M."/>
            <person name="Kumpula E.P."/>
            <person name="Martinez S.M."/>
            <person name="Ignatev A."/>
            <person name="Lepper S."/>
            <person name="Frischknecht F."/>
            <person name="Siden-Kiamos I."/>
            <person name="Sachse C."/>
            <person name="Kursula I."/>
        </authorList>
    </citation>
    <scope>X-RAY CRYSTALLOGRAPHY (1.30 ANGSTROMS) IN COMPLEX WITH ATP AND MOUSE GSN</scope>
    <scope>FUNCTION</scope>
    <scope>CATALYTIC ACTIVITY</scope>
    <scope>ACTIVITY REGULATION</scope>
    <scope>SUBUNIT</scope>
    <scope>MUTAGENESIS OF PHE-54 AND GLY-115</scope>
</reference>
<reference evidence="15" key="4">
    <citation type="journal article" date="2017" name="Acta Crystallogr. D">
        <title>Rapid cadmium SAD phasing at the standard wavelength (1 A).</title>
        <authorList>
            <person name="Panneerselvam S."/>
            <person name="Kumpula E.P."/>
            <person name="Kursula I."/>
            <person name="Burkhardt A."/>
            <person name="Meents A."/>
        </authorList>
    </citation>
    <scope>X-RAY CRYSTALLOGRAPHY (1.40 ANGSTROMS) IN COMPLEX WITH ATP AND MOUSE GSN</scope>
</reference>
<reference evidence="16" key="5">
    <citation type="journal article" date="2017" name="Proc. Natl. Acad. Sci. U.S.A.">
        <title>Near-atomic structure of jasplakinolide-stabilized malaria parasite F-actin reveals the structural basis of filament instability.</title>
        <authorList>
            <person name="Pospich S."/>
            <person name="Kumpula E.P."/>
            <person name="von der Ecken J."/>
            <person name="Vahokoski J."/>
            <person name="Kursula I."/>
            <person name="Raunser S."/>
        </authorList>
    </citation>
    <scope>STRUCTURE BY ELECTRON MICROSCOPY (3.80 ANGSTROMS) IN COMPLEX WITH MG-ADP AND JASPLAKINOLIDE</scope>
    <scope>FUNCTION</scope>
    <scope>SUBUNIT</scope>
</reference>
<reference evidence="17 18 19 20 21 22 23 24 25" key="6">
    <citation type="journal article" date="2019" name="PLoS Biol.">
        <title>Atomic view into Plasmodium actin polymerization, ATP hydrolysis, and fragmentation.</title>
        <authorList>
            <person name="Kumpula E.P."/>
            <person name="Lopez A.J."/>
            <person name="Tajedin L."/>
            <person name="Han H."/>
            <person name="Kursula I."/>
        </authorList>
    </citation>
    <scope>X-RAY CRYSTALLOGRAPHY (1.22 ANGSTROMS) IN COMPLEX WITH MG-ATP; MG-ADP AND MOUSE GSN AND OF MUTANTS TYR-54; GLN-74; ALA-115 AND TRP-272</scope>
    <scope>FUNCTION</scope>
    <scope>CATALYTIC ACTIVITY</scope>
    <scope>MUTAGENESIS OF PRO-42; GLU-49; PHE-54; HIS-74; GLY-115; LYS-270 AND ALA-272</scope>
</reference>
<reference evidence="26 27" key="7">
    <citation type="submission" date="2020-01" db="PDB data bank">
        <title>Malaria parasite actomyosin rigor-state structure at near-atomic resolution.</title>
        <authorList>
            <person name="Vahokoski J."/>
            <person name="Calder L.J."/>
            <person name="Lopez A.J."/>
            <person name="Molloy J.E."/>
            <person name="Rosenthal P.B."/>
            <person name="Kursula I."/>
        </authorList>
    </citation>
    <scope>STRUCTURE BY ELECTRON MICROSCOPY (2.60 ANGSTROMS) IN COMPLEX WITH MG-ADP; JASPLAKINOLIDE AND MYOA</scope>
</reference>
<reference evidence="28" key="8">
    <citation type="journal article" date="2021" name="Nat. Commun.">
        <title>The actomyosin interface contains an evolutionary conserved core and an ancillary interface involved in specificity.</title>
        <authorList>
            <person name="Robert-Paganin J."/>
            <person name="Xu X.P."/>
            <person name="Swift M.F."/>
            <person name="Auguin D."/>
            <person name="Robblee J.P."/>
            <person name="Lu H."/>
            <person name="Fagnant P.M."/>
            <person name="Krementsova E.B."/>
            <person name="Trybus K.M."/>
            <person name="Houdusse A."/>
            <person name="Volkmann N."/>
            <person name="Hanein D."/>
        </authorList>
    </citation>
    <scope>STRUCTURE BY ELECTRON MICROSCOPY (3.77 ANGSTROMS) IN COMPLEX WITH MG-ADP; JASPLAKINOLIDE AND MYOA</scope>
</reference>
<feature type="chain" id="PRO_0000233389" description="Actin-1">
    <location>
        <begin position="1"/>
        <end position="376"/>
    </location>
</feature>
<feature type="region of interest" description="DNAseI-binding D loop; regulates polymerization and stability of the actin filament" evidence="2">
    <location>
        <begin position="40"/>
        <end position="61"/>
    </location>
</feature>
<feature type="binding site" evidence="3 4 7 8 9 14 15 17 18 26 28">
    <location>
        <position position="15"/>
    </location>
    <ligand>
        <name>ATP</name>
        <dbReference type="ChEBI" id="CHEBI:30616"/>
    </ligand>
</feature>
<feature type="binding site" evidence="3 4 7 8 9 14 15 17 18 26 28">
    <location>
        <position position="16"/>
    </location>
    <ligand>
        <name>ATP</name>
        <dbReference type="ChEBI" id="CHEBI:30616"/>
    </ligand>
</feature>
<feature type="binding site" evidence="3 4 6 7 9 14 15 16 17 18 26">
    <location>
        <position position="17"/>
    </location>
    <ligand>
        <name>ATP</name>
        <dbReference type="ChEBI" id="CHEBI:30616"/>
    </ligand>
</feature>
<feature type="binding site" evidence="3 4 6 7 8 9 14 15 16 17 18 26 28">
    <location>
        <position position="19"/>
    </location>
    <ligand>
        <name>ATP</name>
        <dbReference type="ChEBI" id="CHEBI:30616"/>
    </ligand>
</feature>
<feature type="binding site" evidence="3 4 7 8 9 14 15 17 18 26 28">
    <location>
        <position position="158"/>
    </location>
    <ligand>
        <name>ATP</name>
        <dbReference type="ChEBI" id="CHEBI:30616"/>
    </ligand>
</feature>
<feature type="binding site" evidence="3 4 7 14 15 17">
    <location>
        <position position="159"/>
    </location>
    <ligand>
        <name>ATP</name>
        <dbReference type="ChEBI" id="CHEBI:30616"/>
    </ligand>
</feature>
<feature type="binding site" evidence="3 4 6 7 14 15 16 17">
    <location>
        <position position="160"/>
    </location>
    <ligand>
        <name>ATP</name>
        <dbReference type="ChEBI" id="CHEBI:30616"/>
    </ligand>
</feature>
<feature type="binding site" evidence="3 4 7 8 9 14 15 17 18 26 28">
    <location>
        <position position="214"/>
    </location>
    <ligand>
        <name>ATP</name>
        <dbReference type="ChEBI" id="CHEBI:30616"/>
    </ligand>
</feature>
<feature type="binding site" evidence="3 4 7 14 15 17 18">
    <location>
        <position position="215"/>
    </location>
    <ligand>
        <name>ATP</name>
        <dbReference type="ChEBI" id="CHEBI:30616"/>
    </ligand>
</feature>
<feature type="binding site" evidence="3 4 7 8 9 14 15 17 18 26 28">
    <location>
        <position position="303"/>
    </location>
    <ligand>
        <name>ATP</name>
        <dbReference type="ChEBI" id="CHEBI:30616"/>
    </ligand>
</feature>
<feature type="site" description="Not methylated" evidence="7">
    <location>
        <position position="74"/>
    </location>
</feature>
<feature type="mutagenesis site" description="Reduces inorganic phosphate (Pi) release in presence of Mg(2+). No effect of K(+) on Pi release. No effect on Pi release in absence or in presence of K(+); when associated with G-49." evidence="7">
    <original>P</original>
    <variation>Q</variation>
    <location>
        <position position="42"/>
    </location>
</feature>
<feature type="mutagenesis site" description="Increases inorganic phosphate (Pi) release in presence of Mg(2+). No effect of K(+) on Pi release. No effect on Pi release in absence or in presence of K(+); when associated with Q-42." evidence="7">
    <original>E</original>
    <variation>G</variation>
    <location>
        <position position="49"/>
    </location>
</feature>
<feature type="mutagenesis site" description="Fail to form long filaments. No inorganic phosphate (Pi) release in presence of Ca(2+). Increases Pi release in presence of Mg(2+). No effect of K(+) on Pi release." evidence="3 7">
    <original>F</original>
    <variation>Y</variation>
    <location>
        <position position="54"/>
    </location>
</feature>
<feature type="mutagenesis site" description="No formation of long filaments. Reduces inorganic phosphate (Pi) release. No effect of Mg(2+) or K(+) on Pi release. Filament elongation rate appears normal." evidence="7">
    <original>H</original>
    <variation>Q</variation>
    <location>
        <position position="74"/>
    </location>
</feature>
<feature type="mutagenesis site" description="Failure to form long filaments. Inorganic phosphate (Pi) release is slightly better in presence of Ca(2+) than Mg(2+). Slight decrease in inorganic phosphate (Pi) release rates in presence of Mg(2+) or Mg(2+) and K(+)." evidence="3 7">
    <original>G</original>
    <variation>A</variation>
    <location>
        <position position="115"/>
    </location>
</feature>
<feature type="mutagenesis site" description="Forms longer filaments. Increased inorganic phosphate (Pi) release in presence of Mg(2+) which is further increased in presence of K(+). Filament elongation rate is normal." evidence="7">
    <original>K</original>
    <variation>M</variation>
    <location>
        <position position="270"/>
    </location>
</feature>
<feature type="mutagenesis site" description="5-fold increase in inorganic phosphate (Pi) release in presence of Mg(2+)." evidence="7">
    <original>A</original>
    <variation>C</variation>
    <location>
        <position position="272"/>
    </location>
</feature>
<feature type="mutagenesis site" description="Forms longer filaments. 18.9-fold increase in inorganic phosphate (Pi) release in presence of Mg(2+). Filament elongation rate is normal." evidence="7">
    <original>A</original>
    <variation>W</variation>
    <location>
        <position position="272"/>
    </location>
</feature>
<feature type="strand" evidence="29">
    <location>
        <begin position="9"/>
        <end position="13"/>
    </location>
</feature>
<feature type="strand" evidence="29">
    <location>
        <begin position="15"/>
        <end position="22"/>
    </location>
</feature>
<feature type="strand" evidence="29">
    <location>
        <begin position="29"/>
        <end position="33"/>
    </location>
</feature>
<feature type="strand" evidence="29">
    <location>
        <begin position="36"/>
        <end position="38"/>
    </location>
</feature>
<feature type="helix" evidence="29">
    <location>
        <begin position="57"/>
        <end position="60"/>
    </location>
</feature>
<feature type="helix" evidence="29">
    <location>
        <begin position="63"/>
        <end position="65"/>
    </location>
</feature>
<feature type="strand" evidence="29">
    <location>
        <begin position="67"/>
        <end position="69"/>
    </location>
</feature>
<feature type="turn" evidence="29">
    <location>
        <begin position="71"/>
        <end position="74"/>
    </location>
</feature>
<feature type="strand" evidence="32">
    <location>
        <begin position="76"/>
        <end position="78"/>
    </location>
</feature>
<feature type="helix" evidence="29">
    <location>
        <begin position="80"/>
        <end position="92"/>
    </location>
</feature>
<feature type="turn" evidence="29">
    <location>
        <begin position="93"/>
        <end position="95"/>
    </location>
</feature>
<feature type="helix" evidence="29">
    <location>
        <begin position="99"/>
        <end position="101"/>
    </location>
</feature>
<feature type="strand" evidence="29">
    <location>
        <begin position="104"/>
        <end position="108"/>
    </location>
</feature>
<feature type="helix" evidence="29">
    <location>
        <begin position="114"/>
        <end position="126"/>
    </location>
</feature>
<feature type="strand" evidence="29">
    <location>
        <begin position="131"/>
        <end position="137"/>
    </location>
</feature>
<feature type="helix" evidence="29">
    <location>
        <begin position="138"/>
        <end position="145"/>
    </location>
</feature>
<feature type="strand" evidence="29">
    <location>
        <begin position="149"/>
        <end position="156"/>
    </location>
</feature>
<feature type="strand" evidence="29">
    <location>
        <begin position="161"/>
        <end position="167"/>
    </location>
</feature>
<feature type="helix" evidence="29">
    <location>
        <begin position="173"/>
        <end position="175"/>
    </location>
</feature>
<feature type="strand" evidence="29">
    <location>
        <begin position="177"/>
        <end position="180"/>
    </location>
</feature>
<feature type="helix" evidence="29">
    <location>
        <begin position="183"/>
        <end position="193"/>
    </location>
</feature>
<feature type="helix" evidence="29">
    <location>
        <begin position="194"/>
        <end position="197"/>
    </location>
</feature>
<feature type="helix" evidence="29">
    <location>
        <begin position="204"/>
        <end position="217"/>
    </location>
</feature>
<feature type="helix" evidence="29">
    <location>
        <begin position="224"/>
        <end position="231"/>
    </location>
</feature>
<feature type="strand" evidence="29">
    <location>
        <begin position="239"/>
        <end position="242"/>
    </location>
</feature>
<feature type="strand" evidence="30">
    <location>
        <begin position="244"/>
        <end position="246"/>
    </location>
</feature>
<feature type="strand" evidence="29">
    <location>
        <begin position="248"/>
        <end position="252"/>
    </location>
</feature>
<feature type="helix" evidence="29">
    <location>
        <begin position="254"/>
        <end position="260"/>
    </location>
</feature>
<feature type="turn" evidence="29">
    <location>
        <begin position="261"/>
        <end position="263"/>
    </location>
</feature>
<feature type="helix" evidence="29">
    <location>
        <begin position="265"/>
        <end position="268"/>
    </location>
</feature>
<feature type="helix" evidence="29">
    <location>
        <begin position="275"/>
        <end position="284"/>
    </location>
</feature>
<feature type="helix" evidence="29">
    <location>
        <begin position="288"/>
        <end position="295"/>
    </location>
</feature>
<feature type="strand" evidence="29">
    <location>
        <begin position="298"/>
        <end position="302"/>
    </location>
</feature>
<feature type="helix" evidence="29">
    <location>
        <begin position="303"/>
        <end position="305"/>
    </location>
</feature>
<feature type="helix" evidence="29">
    <location>
        <begin position="310"/>
        <end position="321"/>
    </location>
</feature>
<feature type="helix" evidence="29">
    <location>
        <begin position="336"/>
        <end position="338"/>
    </location>
</feature>
<feature type="helix" evidence="29">
    <location>
        <begin position="339"/>
        <end position="347"/>
    </location>
</feature>
<feature type="helix" evidence="29">
    <location>
        <begin position="353"/>
        <end position="355"/>
    </location>
</feature>
<feature type="strand" evidence="29">
    <location>
        <begin position="357"/>
        <end position="359"/>
    </location>
</feature>
<feature type="helix" evidence="29">
    <location>
        <begin position="360"/>
        <end position="366"/>
    </location>
</feature>
<feature type="helix" evidence="31">
    <location>
        <begin position="370"/>
        <end position="374"/>
    </location>
</feature>
<accession>Q8I4X0</accession>
<accession>A0A144A1R5</accession>
<proteinExistence type="evidence at protein level"/>